<accession>A7FMW4</accession>
<reference key="1">
    <citation type="journal article" date="2007" name="PLoS Genet.">
        <title>The complete genome sequence of Yersinia pseudotuberculosis IP31758, the causative agent of Far East scarlet-like fever.</title>
        <authorList>
            <person name="Eppinger M."/>
            <person name="Rosovitz M.J."/>
            <person name="Fricke W.F."/>
            <person name="Rasko D.A."/>
            <person name="Kokorina G."/>
            <person name="Fayolle C."/>
            <person name="Lindler L.E."/>
            <person name="Carniel E."/>
            <person name="Ravel J."/>
        </authorList>
    </citation>
    <scope>NUCLEOTIDE SEQUENCE [LARGE SCALE GENOMIC DNA]</scope>
    <source>
        <strain>IP 31758</strain>
    </source>
</reference>
<evidence type="ECO:0000255" key="1">
    <source>
        <dbReference type="HAMAP-Rule" id="MF_00720"/>
    </source>
</evidence>
<dbReference type="EMBL" id="CP000720">
    <property type="protein sequence ID" value="ABS49406.1"/>
    <property type="molecule type" value="Genomic_DNA"/>
</dbReference>
<dbReference type="SMR" id="A7FMW4"/>
<dbReference type="KEGG" id="ypi:YpsIP31758_3638"/>
<dbReference type="HOGENOM" id="CLU_166075_0_0_6"/>
<dbReference type="Proteomes" id="UP000002412">
    <property type="component" value="Chromosome"/>
</dbReference>
<dbReference type="GO" id="GO:1990077">
    <property type="term" value="C:primosome complex"/>
    <property type="evidence" value="ECO:0007669"/>
    <property type="project" value="UniProtKB-KW"/>
</dbReference>
<dbReference type="GO" id="GO:0003697">
    <property type="term" value="F:single-stranded DNA binding"/>
    <property type="evidence" value="ECO:0007669"/>
    <property type="project" value="UniProtKB-UniRule"/>
</dbReference>
<dbReference type="GO" id="GO:0006269">
    <property type="term" value="P:DNA replication, synthesis of primer"/>
    <property type="evidence" value="ECO:0007669"/>
    <property type="project" value="UniProtKB-KW"/>
</dbReference>
<dbReference type="Gene3D" id="2.40.50.140">
    <property type="entry name" value="Nucleic acid-binding proteins"/>
    <property type="match status" value="1"/>
</dbReference>
<dbReference type="HAMAP" id="MF_00720">
    <property type="entry name" value="PriB"/>
    <property type="match status" value="1"/>
</dbReference>
<dbReference type="InterPro" id="IPR012340">
    <property type="entry name" value="NA-bd_OB-fold"/>
</dbReference>
<dbReference type="InterPro" id="IPR000424">
    <property type="entry name" value="Primosome_PriB/ssb"/>
</dbReference>
<dbReference type="InterPro" id="IPR023646">
    <property type="entry name" value="Prisomal_replication_PriB"/>
</dbReference>
<dbReference type="NCBIfam" id="TIGR04418">
    <property type="entry name" value="PriB_gamma"/>
    <property type="match status" value="1"/>
</dbReference>
<dbReference type="Pfam" id="PF22657">
    <property type="entry name" value="SSB_1"/>
    <property type="match status" value="1"/>
</dbReference>
<dbReference type="PIRSF" id="PIRSF003135">
    <property type="entry name" value="Primosomal_n"/>
    <property type="match status" value="1"/>
</dbReference>
<dbReference type="SUPFAM" id="SSF50249">
    <property type="entry name" value="Nucleic acid-binding proteins"/>
    <property type="match status" value="1"/>
</dbReference>
<dbReference type="PROSITE" id="PS50935">
    <property type="entry name" value="SSB"/>
    <property type="match status" value="1"/>
</dbReference>
<name>PRIB_YERP3</name>
<gene>
    <name evidence="1" type="primary">priB</name>
    <name type="ordered locus">YpsIP31758_3638</name>
</gene>
<organism>
    <name type="scientific">Yersinia pseudotuberculosis serotype O:1b (strain IP 31758)</name>
    <dbReference type="NCBI Taxonomy" id="349747"/>
    <lineage>
        <taxon>Bacteria</taxon>
        <taxon>Pseudomonadati</taxon>
        <taxon>Pseudomonadota</taxon>
        <taxon>Gammaproteobacteria</taxon>
        <taxon>Enterobacterales</taxon>
        <taxon>Yersiniaceae</taxon>
        <taxon>Yersinia</taxon>
    </lineage>
</organism>
<comment type="function">
    <text evidence="1">Involved in the restart of stalled replication forks, which reloads the replicative helicase on sites other than the origin of replication; the PriA-PriB pathway is the major replication restart pathway. During primosome assembly it facilitates complex formation between PriA and DnaT on DNA; stabilizes PriA on DNA. Stimulates the DNA unwinding activity of PriA helicase.</text>
</comment>
<comment type="subunit">
    <text evidence="1">Homodimer. Interacts with PriA and DnaT. Component of the replication restart primosome. Primosome assembly occurs via a 'hand-off' mechanism. PriA binds to replication forks, subsequently PriB then DnaT bind; DnaT then displaces ssDNA to generate the helicase loading substrate.</text>
</comment>
<comment type="similarity">
    <text evidence="1">Belongs to the PriB family.</text>
</comment>
<proteinExistence type="inferred from homology"/>
<sequence length="105" mass="11533">MTTNRLVLSGTVCKTPVRKVSPSGIPHCQFVLEHRSTQQEAGFSRQTWCRMPIVVSGQQSQALTHSITVGSQLTVEGFISCHQGRNGLNKLVLHAEQIEFIDSGD</sequence>
<keyword id="KW-0235">DNA replication</keyword>
<keyword id="KW-0238">DNA-binding</keyword>
<keyword id="KW-0639">Primosome</keyword>
<protein>
    <recommendedName>
        <fullName evidence="1">Replication restart protein PriB</fullName>
    </recommendedName>
</protein>
<feature type="chain" id="PRO_1000083303" description="Replication restart protein PriB">
    <location>
        <begin position="1"/>
        <end position="105"/>
    </location>
</feature>
<feature type="domain" description="SSB" evidence="1">
    <location>
        <begin position="1"/>
        <end position="102"/>
    </location>
</feature>